<feature type="chain" id="PRO_1000013298" description="Large ribosomal subunit protein bL34">
    <location>
        <begin position="1"/>
        <end position="44"/>
    </location>
</feature>
<organism>
    <name type="scientific">Burkholderia mallei (strain SAVP1)</name>
    <dbReference type="NCBI Taxonomy" id="320388"/>
    <lineage>
        <taxon>Bacteria</taxon>
        <taxon>Pseudomonadati</taxon>
        <taxon>Pseudomonadota</taxon>
        <taxon>Betaproteobacteria</taxon>
        <taxon>Burkholderiales</taxon>
        <taxon>Burkholderiaceae</taxon>
        <taxon>Burkholderia</taxon>
        <taxon>pseudomallei group</taxon>
    </lineage>
</organism>
<sequence>MKRTYQPSVTRRKRTHGFRVRMKTAGGRKVINARRAKGRKRLAI</sequence>
<evidence type="ECO:0000255" key="1">
    <source>
        <dbReference type="HAMAP-Rule" id="MF_00391"/>
    </source>
</evidence>
<evidence type="ECO:0000305" key="2"/>
<reference key="1">
    <citation type="journal article" date="2010" name="Genome Biol. Evol.">
        <title>Continuing evolution of Burkholderia mallei through genome reduction and large-scale rearrangements.</title>
        <authorList>
            <person name="Losada L."/>
            <person name="Ronning C.M."/>
            <person name="DeShazer D."/>
            <person name="Woods D."/>
            <person name="Fedorova N."/>
            <person name="Kim H.S."/>
            <person name="Shabalina S.A."/>
            <person name="Pearson T.R."/>
            <person name="Brinkac L."/>
            <person name="Tan P."/>
            <person name="Nandi T."/>
            <person name="Crabtree J."/>
            <person name="Badger J."/>
            <person name="Beckstrom-Sternberg S."/>
            <person name="Saqib M."/>
            <person name="Schutzer S.E."/>
            <person name="Keim P."/>
            <person name="Nierman W.C."/>
        </authorList>
    </citation>
    <scope>NUCLEOTIDE SEQUENCE [LARGE SCALE GENOMIC DNA]</scope>
    <source>
        <strain>SAVP1</strain>
    </source>
</reference>
<accession>A1V7D8</accession>
<protein>
    <recommendedName>
        <fullName evidence="1">Large ribosomal subunit protein bL34</fullName>
    </recommendedName>
    <alternativeName>
        <fullName evidence="2">50S ribosomal protein L34</fullName>
    </alternativeName>
</protein>
<dbReference type="EMBL" id="CP000526">
    <property type="protein sequence ID" value="ABM51285.1"/>
    <property type="molecule type" value="Genomic_DNA"/>
</dbReference>
<dbReference type="RefSeq" id="WP_004198824.1">
    <property type="nucleotide sequence ID" value="NC_008785.1"/>
</dbReference>
<dbReference type="SMR" id="A1V7D8"/>
<dbReference type="GeneID" id="98107775"/>
<dbReference type="KEGG" id="bmv:BMASAVP1_A2847"/>
<dbReference type="HOGENOM" id="CLU_129938_2_0_4"/>
<dbReference type="GO" id="GO:1990904">
    <property type="term" value="C:ribonucleoprotein complex"/>
    <property type="evidence" value="ECO:0007669"/>
    <property type="project" value="UniProtKB-KW"/>
</dbReference>
<dbReference type="GO" id="GO:0005840">
    <property type="term" value="C:ribosome"/>
    <property type="evidence" value="ECO:0007669"/>
    <property type="project" value="UniProtKB-KW"/>
</dbReference>
<dbReference type="GO" id="GO:0003735">
    <property type="term" value="F:structural constituent of ribosome"/>
    <property type="evidence" value="ECO:0007669"/>
    <property type="project" value="InterPro"/>
</dbReference>
<dbReference type="GO" id="GO:0006412">
    <property type="term" value="P:translation"/>
    <property type="evidence" value="ECO:0007669"/>
    <property type="project" value="UniProtKB-UniRule"/>
</dbReference>
<dbReference type="FunFam" id="1.10.287.3980:FF:000001">
    <property type="entry name" value="Mitochondrial ribosomal protein L34"/>
    <property type="match status" value="1"/>
</dbReference>
<dbReference type="Gene3D" id="1.10.287.3980">
    <property type="match status" value="1"/>
</dbReference>
<dbReference type="HAMAP" id="MF_00391">
    <property type="entry name" value="Ribosomal_bL34"/>
    <property type="match status" value="1"/>
</dbReference>
<dbReference type="InterPro" id="IPR000271">
    <property type="entry name" value="Ribosomal_bL34"/>
</dbReference>
<dbReference type="InterPro" id="IPR020939">
    <property type="entry name" value="Ribosomal_bL34_CS"/>
</dbReference>
<dbReference type="NCBIfam" id="TIGR01030">
    <property type="entry name" value="rpmH_bact"/>
    <property type="match status" value="1"/>
</dbReference>
<dbReference type="PANTHER" id="PTHR14503:SF4">
    <property type="entry name" value="LARGE RIBOSOMAL SUBUNIT PROTEIN BL34M"/>
    <property type="match status" value="1"/>
</dbReference>
<dbReference type="PANTHER" id="PTHR14503">
    <property type="entry name" value="MITOCHONDRIAL RIBOSOMAL PROTEIN 34 FAMILY MEMBER"/>
    <property type="match status" value="1"/>
</dbReference>
<dbReference type="Pfam" id="PF00468">
    <property type="entry name" value="Ribosomal_L34"/>
    <property type="match status" value="1"/>
</dbReference>
<dbReference type="PROSITE" id="PS00784">
    <property type="entry name" value="RIBOSOMAL_L34"/>
    <property type="match status" value="1"/>
</dbReference>
<gene>
    <name evidence="1" type="primary">rpmH</name>
    <name type="ordered locus">BMASAVP1_A2847</name>
</gene>
<comment type="similarity">
    <text evidence="1">Belongs to the bacterial ribosomal protein bL34 family.</text>
</comment>
<proteinExistence type="inferred from homology"/>
<keyword id="KW-0687">Ribonucleoprotein</keyword>
<keyword id="KW-0689">Ribosomal protein</keyword>
<name>RL34_BURMS</name>